<accession>B5Z1X6</accession>
<gene>
    <name evidence="1" type="primary">tam</name>
    <name type="ordered locus">ECH74115_2132</name>
</gene>
<evidence type="ECO:0000255" key="1">
    <source>
        <dbReference type="HAMAP-Rule" id="MF_00560"/>
    </source>
</evidence>
<proteinExistence type="inferred from homology"/>
<dbReference type="EC" id="2.1.1.144" evidence="1"/>
<dbReference type="EMBL" id="CP001164">
    <property type="protein sequence ID" value="ACI38680.1"/>
    <property type="molecule type" value="Genomic_DNA"/>
</dbReference>
<dbReference type="RefSeq" id="WP_001286577.1">
    <property type="nucleotide sequence ID" value="NC_011353.1"/>
</dbReference>
<dbReference type="SMR" id="B5Z1X6"/>
<dbReference type="KEGG" id="ecf:ECH74115_2132"/>
<dbReference type="HOGENOM" id="CLU_037990_5_2_6"/>
<dbReference type="GO" id="GO:0005737">
    <property type="term" value="C:cytoplasm"/>
    <property type="evidence" value="ECO:0007669"/>
    <property type="project" value="UniProtKB-SubCell"/>
</dbReference>
<dbReference type="GO" id="GO:0030798">
    <property type="term" value="F:trans-aconitate 2-methyltransferase activity"/>
    <property type="evidence" value="ECO:0007669"/>
    <property type="project" value="UniProtKB-UniRule"/>
</dbReference>
<dbReference type="GO" id="GO:0032259">
    <property type="term" value="P:methylation"/>
    <property type="evidence" value="ECO:0007669"/>
    <property type="project" value="UniProtKB-KW"/>
</dbReference>
<dbReference type="CDD" id="cd02440">
    <property type="entry name" value="AdoMet_MTases"/>
    <property type="match status" value="1"/>
</dbReference>
<dbReference type="Gene3D" id="1.10.150.290">
    <property type="entry name" value="S-adenosyl-L-methionine-dependent methyltransferases"/>
    <property type="match status" value="1"/>
</dbReference>
<dbReference type="Gene3D" id="3.40.50.150">
    <property type="entry name" value="Vaccinia Virus protein VP39"/>
    <property type="match status" value="1"/>
</dbReference>
<dbReference type="HAMAP" id="MF_00560">
    <property type="entry name" value="Tran_acon_Me_trans"/>
    <property type="match status" value="1"/>
</dbReference>
<dbReference type="InterPro" id="IPR041698">
    <property type="entry name" value="Methyltransf_25"/>
</dbReference>
<dbReference type="InterPro" id="IPR029063">
    <property type="entry name" value="SAM-dependent_MTases_sf"/>
</dbReference>
<dbReference type="InterPro" id="IPR023506">
    <property type="entry name" value="Trans-aconitate_MeTrfase"/>
</dbReference>
<dbReference type="InterPro" id="IPR023149">
    <property type="entry name" value="Trans_acon_MeTrfase_C"/>
</dbReference>
<dbReference type="NCBIfam" id="NF002463">
    <property type="entry name" value="PRK01683.1"/>
    <property type="match status" value="1"/>
</dbReference>
<dbReference type="PANTHER" id="PTHR43861:SF1">
    <property type="entry name" value="TRANS-ACONITATE 2-METHYLTRANSFERASE"/>
    <property type="match status" value="1"/>
</dbReference>
<dbReference type="PANTHER" id="PTHR43861">
    <property type="entry name" value="TRANS-ACONITATE 2-METHYLTRANSFERASE-RELATED"/>
    <property type="match status" value="1"/>
</dbReference>
<dbReference type="Pfam" id="PF13649">
    <property type="entry name" value="Methyltransf_25"/>
    <property type="match status" value="1"/>
</dbReference>
<dbReference type="SUPFAM" id="SSF53335">
    <property type="entry name" value="S-adenosyl-L-methionine-dependent methyltransferases"/>
    <property type="match status" value="1"/>
</dbReference>
<feature type="chain" id="PRO_1000129251" description="Trans-aconitate 2-methyltransferase">
    <location>
        <begin position="1"/>
        <end position="252"/>
    </location>
</feature>
<sequence>MSDWNPSLYLHFAAERSRPAVELLARVPLENVDYVADLGCGPGNSTALLHQRWPAARITGIDSSPAMIAEARSALPDCQFVEADIRNWQPEQALDLIFANASLQWLPDHYELFPHLVSLLNPQGVLAVQMPDNWLEPTHVLMREVAWEQNYPDRGRESLAGVHAYYDILSEAGCEVDIWRTTYYHQMPSHQAIIDWVTATGLRPWLQDLTESEQQLFLTRYHQMLKEQYPLQENGQILLAFPRLFIVARRTE</sequence>
<protein>
    <recommendedName>
        <fullName evidence="1">Trans-aconitate 2-methyltransferase</fullName>
        <ecNumber evidence="1">2.1.1.144</ecNumber>
    </recommendedName>
</protein>
<keyword id="KW-0963">Cytoplasm</keyword>
<keyword id="KW-0489">Methyltransferase</keyword>
<keyword id="KW-0949">S-adenosyl-L-methionine</keyword>
<keyword id="KW-0808">Transferase</keyword>
<comment type="function">
    <text evidence="1">Catalyzes the S-adenosylmethionine monomethyl esterification of trans-aconitate.</text>
</comment>
<comment type="catalytic activity">
    <reaction evidence="1">
        <text>trans-aconitate + S-adenosyl-L-methionine = (E)-3-(methoxycarbonyl)pent-2-enedioate + S-adenosyl-L-homocysteine</text>
        <dbReference type="Rhea" id="RHEA:14969"/>
        <dbReference type="ChEBI" id="CHEBI:15708"/>
        <dbReference type="ChEBI" id="CHEBI:57470"/>
        <dbReference type="ChEBI" id="CHEBI:57856"/>
        <dbReference type="ChEBI" id="CHEBI:59789"/>
        <dbReference type="EC" id="2.1.1.144"/>
    </reaction>
</comment>
<comment type="subcellular location">
    <subcellularLocation>
        <location evidence="1">Cytoplasm</location>
    </subcellularLocation>
</comment>
<comment type="similarity">
    <text evidence="1">Belongs to the methyltransferase superfamily. Tam family.</text>
</comment>
<organism>
    <name type="scientific">Escherichia coli O157:H7 (strain EC4115 / EHEC)</name>
    <dbReference type="NCBI Taxonomy" id="444450"/>
    <lineage>
        <taxon>Bacteria</taxon>
        <taxon>Pseudomonadati</taxon>
        <taxon>Pseudomonadota</taxon>
        <taxon>Gammaproteobacteria</taxon>
        <taxon>Enterobacterales</taxon>
        <taxon>Enterobacteriaceae</taxon>
        <taxon>Escherichia</taxon>
    </lineage>
</organism>
<name>TAM_ECO5E</name>
<reference key="1">
    <citation type="journal article" date="2011" name="Proc. Natl. Acad. Sci. U.S.A.">
        <title>Genomic anatomy of Escherichia coli O157:H7 outbreaks.</title>
        <authorList>
            <person name="Eppinger M."/>
            <person name="Mammel M.K."/>
            <person name="Leclerc J.E."/>
            <person name="Ravel J."/>
            <person name="Cebula T.A."/>
        </authorList>
    </citation>
    <scope>NUCLEOTIDE SEQUENCE [LARGE SCALE GENOMIC DNA]</scope>
    <source>
        <strain>EC4115 / EHEC</strain>
    </source>
</reference>